<comment type="function">
    <molecule>Serine protease</molecule>
    <text>Responsible for cleavage of polyprotein P2A and replicase polyprotein P2AB.</text>
</comment>
<comment type="function">
    <molecule>VPg</molecule>
    <text>Covalently attached to the 5' extremity of the genomic and subgenomic RNAs. It may serve as a primer for the replicase.</text>
</comment>
<comment type="function">
    <molecule>RNA-directed RNA polymerase</molecule>
    <text evidence="2">Replicates the viral genome.</text>
</comment>
<comment type="catalytic activity">
    <reaction evidence="2">
        <text>RNA(n) + a ribonucleoside 5'-triphosphate = RNA(n+1) + diphosphate</text>
        <dbReference type="Rhea" id="RHEA:21248"/>
        <dbReference type="Rhea" id="RHEA-COMP:14527"/>
        <dbReference type="Rhea" id="RHEA-COMP:17342"/>
        <dbReference type="ChEBI" id="CHEBI:33019"/>
        <dbReference type="ChEBI" id="CHEBI:61557"/>
        <dbReference type="ChEBI" id="CHEBI:140395"/>
        <dbReference type="EC" id="2.7.7.48"/>
    </reaction>
</comment>
<comment type="subcellular location">
    <molecule>Replicase polyprotein P2AB</molecule>
    <subcellularLocation>
        <location evidence="7">Host membrane</location>
        <topology evidence="7">Multi-pass membrane protein</topology>
    </subcellularLocation>
</comment>
<comment type="subcellular location">
    <molecule>N-terminal protein</molecule>
    <subcellularLocation>
        <location evidence="7">Host membrane</location>
        <topology evidence="7">Multi-pass membrane protein</topology>
    </subcellularLocation>
</comment>
<comment type="alternative products">
    <event type="ribosomal frameshifting"/>
    <isoform>
        <id>Q0PW25-1</id>
        <name>Replicase polyprotein P2AB</name>
        <sequence type="displayed"/>
    </isoform>
    <isoform>
        <id>Q89504-1</id>
        <name>Polyprotein P2A</name>
        <sequence type="external"/>
    </isoform>
</comment>
<comment type="PTM">
    <text evidence="5 6">The polyprotein is proteolytically cleaved into several chains by the viral protease.</text>
</comment>
<comment type="miscellaneous">
    <molecule>Isoform Replicase polyprotein P2AB</molecule>
    <text>Produced by -1 ribosomal frameshifting at the 2A-2B genes boundary.</text>
</comment>
<feature type="chain" id="PRO_0000409857" description="Replicase polyprotein P2AB">
    <location>
        <begin position="1"/>
        <end position="942"/>
    </location>
</feature>
<feature type="chain" id="PRO_0000409858" description="N-terminal protein" evidence="1">
    <location>
        <begin position="1"/>
        <end position="130"/>
    </location>
</feature>
<feature type="chain" id="PRO_0000409859" description="Serine protease" evidence="1">
    <location>
        <begin position="131"/>
        <end position="319"/>
    </location>
</feature>
<feature type="chain" id="PRO_0000409860" description="VPg" evidence="1">
    <location>
        <begin position="320"/>
        <end position="397"/>
    </location>
</feature>
<feature type="chain" id="PRO_0000409861" description="RNA-directed RNA polymerase" evidence="1">
    <location>
        <begin position="398"/>
        <end position="942"/>
    </location>
</feature>
<feature type="transmembrane region" description="Helical" evidence="1">
    <location>
        <begin position="10"/>
        <end position="30"/>
    </location>
</feature>
<feature type="transmembrane region" description="Helical" evidence="1">
    <location>
        <begin position="41"/>
        <end position="61"/>
    </location>
</feature>
<feature type="domain" description="Peptidase S39" evidence="3">
    <location>
        <begin position="129"/>
        <end position="326"/>
    </location>
</feature>
<feature type="domain" description="RdRp catalytic" evidence="2">
    <location>
        <begin position="691"/>
        <end position="805"/>
    </location>
</feature>
<feature type="region of interest" description="Disordered" evidence="4">
    <location>
        <begin position="888"/>
        <end position="917"/>
    </location>
</feature>
<feature type="compositionally biased region" description="Polar residues" evidence="4">
    <location>
        <begin position="897"/>
        <end position="908"/>
    </location>
</feature>
<feature type="active site" description="For protease activity" evidence="3">
    <location>
        <position position="176"/>
    </location>
</feature>
<feature type="active site" description="For protease activity" evidence="3">
    <location>
        <position position="209"/>
    </location>
</feature>
<feature type="active site" description="For protease activity" evidence="3">
    <location>
        <position position="276"/>
    </location>
</feature>
<feature type="site" description="Cleavage; by viral serine protease" evidence="1">
    <location>
        <begin position="130"/>
        <end position="131"/>
    </location>
</feature>
<feature type="site" description="Cleavage; by viral serine protease" evidence="1">
    <location>
        <begin position="319"/>
        <end position="320"/>
    </location>
</feature>
<feature type="site" description="Interacts with viral RNA (covalent)">
    <location>
        <position position="324"/>
    </location>
</feature>
<feature type="site" description="Cleavage; by viral serine protease" evidence="1">
    <location>
        <begin position="397"/>
        <end position="398"/>
    </location>
</feature>
<feature type="modified residue" description="Phosphothreonine; by host" evidence="6">
    <location>
        <position position="339"/>
    </location>
</feature>
<feature type="modified residue" description="Phosphoserine; by host" evidence="6">
    <location>
        <position position="390"/>
    </location>
</feature>
<feature type="sequence conflict" description="In Ref. 1; Z48630." evidence="7" ref="1">
    <original>I</original>
    <variation>V</variation>
    <location>
        <position position="27"/>
    </location>
</feature>
<feature type="sequence conflict" description="In Ref. 1; Z48630." evidence="7" ref="1">
    <original>CE</original>
    <variation>WQ</variation>
    <location>
        <begin position="61"/>
        <end position="62"/>
    </location>
</feature>
<feature type="sequence conflict" description="In Ref. 1; Z48630." evidence="7" ref="1">
    <original>T</original>
    <variation>A</variation>
    <location>
        <position position="75"/>
    </location>
</feature>
<feature type="sequence conflict" description="In Ref. 1; Z48630." evidence="7" ref="1">
    <original>K</original>
    <variation>R</variation>
    <location>
        <position position="217"/>
    </location>
</feature>
<feature type="sequence conflict" description="In Ref. 1; Z48630." evidence="7" ref="1">
    <original>T</original>
    <variation>A</variation>
    <location>
        <position position="752"/>
    </location>
</feature>
<reference key="1">
    <citation type="journal article" date="1995" name="J. Gen. Virol.">
        <title>Characterization of cocksfoot mottle sobemovirus genomic RNA and sequence comparison with related viruses.</title>
        <authorList>
            <person name="Maekinen K."/>
            <person name="Tamm T."/>
            <person name="Naess V."/>
            <person name="Truve E."/>
            <person name="Puurand U."/>
            <person name="Munthe T."/>
            <person name="Saarma M."/>
        </authorList>
    </citation>
    <scope>NUCLEOTIDE SEQUENCE [GENOMIC RNA]</scope>
</reference>
<reference key="2">
    <citation type="journal article" date="2006" name="Virus Genes">
        <title>P1 protein of Cocksfoot mottle virus is indispensable for the systemic spread of the virus.</title>
        <authorList>
            <person name="Meier M."/>
            <person name="Paves H."/>
            <person name="Olspert A."/>
            <person name="Tamm T."/>
            <person name="Truve E."/>
        </authorList>
    </citation>
    <scope>NUCLEOTIDE SEQUENCE [GENOMIC RNA]</scope>
</reference>
<reference key="3">
    <citation type="journal article" date="2000" name="J. Gen. Virol.">
        <title>Characterization of VPg and the polyprotein processing of cocksfoot mottle virus (genus Sobemovirus).</title>
        <authorList>
            <person name="Maekinen K."/>
            <person name="Maekelaeinen K."/>
            <person name="Arshava N."/>
            <person name="Tamm T."/>
            <person name="Merits A."/>
            <person name="Truve E."/>
            <person name="Zavriev S."/>
            <person name="Saarma M."/>
        </authorList>
    </citation>
    <scope>PROTEIN SEQUENCE OF 320-336</scope>
    <scope>PROTEOLYTIC PROCESSING OF POLYPROTEIN</scope>
    <scope>CHARACTERIZATION OF VPG</scope>
</reference>
<reference key="4">
    <citation type="journal article" date="1995" name="Virology">
        <title>The putative replicase of the cocksfoot mottle sobemovirus is translated as a part of the polyprotein by -1 ribosomal frameshift.</title>
        <authorList>
            <person name="Maekinen K."/>
            <person name="Naess V."/>
            <person name="Tamm T."/>
            <person name="Truve E."/>
            <person name="Aaspollu A."/>
            <person name="Saarma M."/>
        </authorList>
    </citation>
    <scope>RIBOSOMAL FRAMESHIFT</scope>
</reference>
<reference key="5">
    <citation type="journal article" date="2000" name="Eur. J. Biochem.">
        <title>Regulation of -1 ribosomal frameshifting directed by cocksfoot mottle sobemovirus genome.</title>
        <authorList>
            <person name="Lucchesi J."/>
            <person name="Makelainen K."/>
            <person name="Merits A."/>
            <person name="Tamm T."/>
            <person name="Makinen K."/>
        </authorList>
    </citation>
    <scope>RIBOSOMAL FRAMESHIFT</scope>
</reference>
<reference key="6">
    <citation type="journal article" date="2009" name="Virus Res.">
        <title>Stem-loop structure of Cocksfoot mottle virus RNA is indispensable for programmed -1 ribosomal frameshifting.</title>
        <authorList>
            <person name="Tamm T."/>
            <person name="Suurvali J."/>
            <person name="Lucchesi J."/>
            <person name="Olspert A."/>
            <person name="Truve E."/>
        </authorList>
    </citation>
    <scope>RIBOSOMAL FRAMESHIFT</scope>
</reference>
<reference key="7">
    <citation type="journal article" date="2011" name="J. Gen. Virol.">
        <title>Protein-RNA linkage and post-translational modifications of two sobemovirus VPgs.</title>
        <authorList>
            <person name="Olspert A."/>
            <person name="Peil L."/>
            <person name="Hebrard E."/>
            <person name="Fargette D."/>
            <person name="Truve E."/>
        </authorList>
    </citation>
    <scope>PROTEOLYTIC PROCESSING OF POLYPROTEIN</scope>
    <scope>PHOSPHORYLATION AT THR-339 AND SER-390</scope>
</reference>
<keyword id="KW-0191">Covalent protein-RNA linkage</keyword>
<keyword id="KW-0903">Direct protein sequencing</keyword>
<keyword id="KW-1043">Host membrane</keyword>
<keyword id="KW-0378">Hydrolase</keyword>
<keyword id="KW-0472">Membrane</keyword>
<keyword id="KW-0547">Nucleotide-binding</keyword>
<keyword id="KW-0548">Nucleotidyltransferase</keyword>
<keyword id="KW-0597">Phosphoprotein</keyword>
<keyword id="KW-0645">Protease</keyword>
<keyword id="KW-1185">Reference proteome</keyword>
<keyword id="KW-0688">Ribosomal frameshifting</keyword>
<keyword id="KW-0696">RNA-directed RNA polymerase</keyword>
<keyword id="KW-0720">Serine protease</keyword>
<keyword id="KW-0808">Transferase</keyword>
<keyword id="KW-0812">Transmembrane</keyword>
<keyword id="KW-1133">Transmembrane helix</keyword>
<keyword id="KW-0693">Viral RNA replication</keyword>
<evidence type="ECO:0000255" key="1"/>
<evidence type="ECO:0000255" key="2">
    <source>
        <dbReference type="PROSITE-ProRule" id="PRU00539"/>
    </source>
</evidence>
<evidence type="ECO:0000255" key="3">
    <source>
        <dbReference type="PROSITE-ProRule" id="PRU01216"/>
    </source>
</evidence>
<evidence type="ECO:0000256" key="4">
    <source>
        <dbReference type="SAM" id="MobiDB-lite"/>
    </source>
</evidence>
<evidence type="ECO:0000269" key="5">
    <source>
    </source>
</evidence>
<evidence type="ECO:0000269" key="6">
    <source>
    </source>
</evidence>
<evidence type="ECO:0000305" key="7"/>
<name>RDRP_CFMVN</name>
<dbReference type="EC" id="3.4.21.-"/>
<dbReference type="EC" id="2.7.7.48"/>
<dbReference type="EMBL" id="Z48630">
    <property type="status" value="NOT_ANNOTATED_CDS"/>
    <property type="molecule type" value="Genomic_RNA"/>
</dbReference>
<dbReference type="EMBL" id="DQ680848">
    <property type="protein sequence ID" value="ABG73619.1"/>
    <property type="molecule type" value="Genomic_RNA"/>
</dbReference>
<dbReference type="SMR" id="Q0PW25"/>
<dbReference type="MEROPS" id="S39.001"/>
<dbReference type="iPTMnet" id="Q0PW25"/>
<dbReference type="Proteomes" id="UP000001461">
    <property type="component" value="Segment"/>
</dbReference>
<dbReference type="Proteomes" id="UP000008994">
    <property type="component" value="Segment"/>
</dbReference>
<dbReference type="GO" id="GO:0033644">
    <property type="term" value="C:host cell membrane"/>
    <property type="evidence" value="ECO:0007669"/>
    <property type="project" value="UniProtKB-SubCell"/>
</dbReference>
<dbReference type="GO" id="GO:0016020">
    <property type="term" value="C:membrane"/>
    <property type="evidence" value="ECO:0007669"/>
    <property type="project" value="UniProtKB-KW"/>
</dbReference>
<dbReference type="GO" id="GO:0000166">
    <property type="term" value="F:nucleotide binding"/>
    <property type="evidence" value="ECO:0007669"/>
    <property type="project" value="UniProtKB-KW"/>
</dbReference>
<dbReference type="GO" id="GO:0003723">
    <property type="term" value="F:RNA binding"/>
    <property type="evidence" value="ECO:0007669"/>
    <property type="project" value="InterPro"/>
</dbReference>
<dbReference type="GO" id="GO:0003968">
    <property type="term" value="F:RNA-directed RNA polymerase activity"/>
    <property type="evidence" value="ECO:0007669"/>
    <property type="project" value="UniProtKB-KW"/>
</dbReference>
<dbReference type="GO" id="GO:0004252">
    <property type="term" value="F:serine-type endopeptidase activity"/>
    <property type="evidence" value="ECO:0007669"/>
    <property type="project" value="InterPro"/>
</dbReference>
<dbReference type="GO" id="GO:0006351">
    <property type="term" value="P:DNA-templated transcription"/>
    <property type="evidence" value="ECO:0007669"/>
    <property type="project" value="InterPro"/>
</dbReference>
<dbReference type="GO" id="GO:0006508">
    <property type="term" value="P:proteolysis"/>
    <property type="evidence" value="ECO:0007669"/>
    <property type="project" value="UniProtKB-KW"/>
</dbReference>
<dbReference type="GO" id="GO:0039694">
    <property type="term" value="P:viral RNA genome replication"/>
    <property type="evidence" value="ECO:0007669"/>
    <property type="project" value="InterPro"/>
</dbReference>
<dbReference type="GO" id="GO:0075523">
    <property type="term" value="P:viral translational frameshifting"/>
    <property type="evidence" value="ECO:0007669"/>
    <property type="project" value="UniProtKB-KW"/>
</dbReference>
<dbReference type="CDD" id="cd23180">
    <property type="entry name" value="ps-ssRNAv_Solemoviridae_RdRp"/>
    <property type="match status" value="1"/>
</dbReference>
<dbReference type="Gene3D" id="2.40.10.10">
    <property type="entry name" value="Trypsin-like serine proteases"/>
    <property type="match status" value="2"/>
</dbReference>
<dbReference type="InterPro" id="IPR043502">
    <property type="entry name" value="DNA/RNA_pol_sf"/>
</dbReference>
<dbReference type="InterPro" id="IPR009003">
    <property type="entry name" value="Peptidase_S1_PA"/>
</dbReference>
<dbReference type="InterPro" id="IPR043504">
    <property type="entry name" value="Peptidase_S1_PA_chymotrypsin"/>
</dbReference>
<dbReference type="InterPro" id="IPR000382">
    <property type="entry name" value="Peptidase_S39B_luteovirus"/>
</dbReference>
<dbReference type="InterPro" id="IPR001795">
    <property type="entry name" value="RNA-dir_pol_luteovirus"/>
</dbReference>
<dbReference type="InterPro" id="IPR007094">
    <property type="entry name" value="RNA-dir_pol_PSvirus"/>
</dbReference>
<dbReference type="Pfam" id="PF02122">
    <property type="entry name" value="Peptidase_S39"/>
    <property type="match status" value="1"/>
</dbReference>
<dbReference type="Pfam" id="PF02123">
    <property type="entry name" value="RdRP_4"/>
    <property type="match status" value="1"/>
</dbReference>
<dbReference type="PRINTS" id="PR00914">
    <property type="entry name" value="LVIRUSRNAPOL"/>
</dbReference>
<dbReference type="SUPFAM" id="SSF56672">
    <property type="entry name" value="DNA/RNA polymerases"/>
    <property type="match status" value="1"/>
</dbReference>
<dbReference type="SUPFAM" id="SSF50494">
    <property type="entry name" value="Trypsin-like serine proteases"/>
    <property type="match status" value="1"/>
</dbReference>
<dbReference type="PROSITE" id="PS51868">
    <property type="entry name" value="PEPTIDASE_S39"/>
    <property type="match status" value="1"/>
</dbReference>
<dbReference type="PROSITE" id="PS50507">
    <property type="entry name" value="RDRP_SSRNA_POS"/>
    <property type="match status" value="1"/>
</dbReference>
<organismHost>
    <name type="scientific">Dactylis glomerata</name>
    <name type="common">Orchard grass</name>
    <name type="synonym">Cock's-foot grass</name>
    <dbReference type="NCBI Taxonomy" id="4509"/>
</organismHost>
<organismHost>
    <name type="scientific">Triticum aestivum</name>
    <name type="common">Wheat</name>
    <dbReference type="NCBI Taxonomy" id="4565"/>
</organismHost>
<gene>
    <name type="ORF">ORF2A-2B</name>
</gene>
<sequence length="942" mass="103355">MGCSVVGNCKSVMLMSRMSWSKLALLISVAMAAAMTDSPPTLICMGILVSVVLNWIVCAVCEEASELILGVSLETTRPSPARVIGEPVFDPRYGYVAPAIYDGKSFDVILPISALSSASTRKETVEMAVENSRLQPLESSQTPKSLVALYSQDLLSGWGSRIKGPDGQEYLLTALHVWETNISHLCKDGKKVPISGCPIVASSADSDLDFVLVSVPKNAWSVLGVGVARLELLKRRTVVTVYGGLDSKTTYCATGVAELENPFRIVTKVTTTGGWSGSPLYHKDAIVGLHLGARPSAGVNRACNVAMAFRVVRKFVTVENSELYPDQSSGPARELDAETYTERLEQGIAFTEYNISGITVKTSDREWTTAEALRVARYKPLGGGKAWGDSDDEDTQETAIRPLNLPAGGLPTGQSALGQLIEYAGYVWRDEGIINSNGMPFRSAGKSSCRFREAVCRAVHRDVRAAETEFPELKELAWPSRGSKAEIGSLLFQAGRFERVEAPANLQLAITNLQAQYPRSRPRSCFRREPWCREDFVAEIEKIAHSGEINLKASPGVPLAEIGVSNQQVIDVAWPLVCEAVVERLHALASVDPRQHDWSPEELVKRGLCDPVRLFVKQEPHSRQKIEQGRFRLISSVSLVDQLVERMLFGPQNTTEIALWHSNPSKPGMGLSKASQVALLWEDLARKHQTHPGAMADISGFDWSVQDWELWADVSMRIELGSFPALMAKAAISRFYCLMNATFQLTNGELLTQELPGLMKSGSYCTSSSNSRIRCLMAELIGSPWCIAMGDDSVEGWVDDAPRKYSALGHLCKEYEACPVLPNGDLKEVSFCSHLISKGRAELETWPKCLFRYLSGPHDVESLEMELSSSRRWGQIVRYLRRIGRVSGNDGEERSSNESPATTKTQGSAAAWGPPQEAWPVDGASLSTFEPSSSGWFHLEGW</sequence>
<accession>Q0PW25</accession>
<proteinExistence type="evidence at protein level"/>
<protein>
    <recommendedName>
        <fullName>Replicase polyprotein P2AB</fullName>
    </recommendedName>
    <component>
        <recommendedName>
            <fullName>N-terminal protein</fullName>
        </recommendedName>
    </component>
    <component>
        <recommendedName>
            <fullName>Serine protease</fullName>
            <ecNumber>3.4.21.-</ecNumber>
        </recommendedName>
    </component>
    <component>
        <recommendedName>
            <fullName>VPg</fullName>
        </recommendedName>
    </component>
    <component>
        <recommendedName>
            <fullName>RNA-directed RNA polymerase</fullName>
            <ecNumber>2.7.7.48</ecNumber>
        </recommendedName>
        <alternativeName>
            <fullName>RdRp</fullName>
        </alternativeName>
    </component>
</protein>
<organism>
    <name type="scientific">Cocksfoot mottle virus (isolate Dactylis glomerata/Norway/CfMV-NO/1995)</name>
    <name type="common">CfMV</name>
    <dbReference type="NCBI Taxonomy" id="1005059"/>
    <lineage>
        <taxon>Viruses</taxon>
        <taxon>Riboviria</taxon>
        <taxon>Orthornavirae</taxon>
        <taxon>Pisuviricota</taxon>
        <taxon>Pisoniviricetes</taxon>
        <taxon>Sobelivirales</taxon>
        <taxon>Solemoviridae</taxon>
        <taxon>Sobemovirus</taxon>
        <taxon>Cocksfoot mottle virus</taxon>
    </lineage>
</organism>